<feature type="chain" id="PRO_1000125757" description="Glucose-6-phosphate isomerase">
    <location>
        <begin position="1"/>
        <end position="549"/>
    </location>
</feature>
<feature type="active site" description="Proton donor" evidence="1">
    <location>
        <position position="355"/>
    </location>
</feature>
<feature type="active site" evidence="1">
    <location>
        <position position="386"/>
    </location>
</feature>
<feature type="active site" evidence="1">
    <location>
        <position position="514"/>
    </location>
</feature>
<dbReference type="EC" id="5.3.1.9" evidence="1"/>
<dbReference type="EMBL" id="CP001127">
    <property type="protein sequence ID" value="ACF91920.1"/>
    <property type="molecule type" value="Genomic_DNA"/>
</dbReference>
<dbReference type="RefSeq" id="WP_000790032.1">
    <property type="nucleotide sequence ID" value="NC_011094.1"/>
</dbReference>
<dbReference type="SMR" id="B4TQN8"/>
<dbReference type="KEGG" id="sew:SeSA_A4412"/>
<dbReference type="HOGENOM" id="CLU_017947_3_1_6"/>
<dbReference type="UniPathway" id="UPA00109">
    <property type="reaction ID" value="UER00181"/>
</dbReference>
<dbReference type="UniPathway" id="UPA00138"/>
<dbReference type="Proteomes" id="UP000001865">
    <property type="component" value="Chromosome"/>
</dbReference>
<dbReference type="GO" id="GO:0005829">
    <property type="term" value="C:cytosol"/>
    <property type="evidence" value="ECO:0007669"/>
    <property type="project" value="TreeGrafter"/>
</dbReference>
<dbReference type="GO" id="GO:0097367">
    <property type="term" value="F:carbohydrate derivative binding"/>
    <property type="evidence" value="ECO:0007669"/>
    <property type="project" value="InterPro"/>
</dbReference>
<dbReference type="GO" id="GO:0004347">
    <property type="term" value="F:glucose-6-phosphate isomerase activity"/>
    <property type="evidence" value="ECO:0007669"/>
    <property type="project" value="UniProtKB-UniRule"/>
</dbReference>
<dbReference type="GO" id="GO:0048029">
    <property type="term" value="F:monosaccharide binding"/>
    <property type="evidence" value="ECO:0007669"/>
    <property type="project" value="TreeGrafter"/>
</dbReference>
<dbReference type="GO" id="GO:0006094">
    <property type="term" value="P:gluconeogenesis"/>
    <property type="evidence" value="ECO:0007669"/>
    <property type="project" value="UniProtKB-UniRule"/>
</dbReference>
<dbReference type="GO" id="GO:0051156">
    <property type="term" value="P:glucose 6-phosphate metabolic process"/>
    <property type="evidence" value="ECO:0007669"/>
    <property type="project" value="TreeGrafter"/>
</dbReference>
<dbReference type="GO" id="GO:0006096">
    <property type="term" value="P:glycolytic process"/>
    <property type="evidence" value="ECO:0007669"/>
    <property type="project" value="UniProtKB-UniRule"/>
</dbReference>
<dbReference type="CDD" id="cd05015">
    <property type="entry name" value="SIS_PGI_1"/>
    <property type="match status" value="1"/>
</dbReference>
<dbReference type="CDD" id="cd05016">
    <property type="entry name" value="SIS_PGI_2"/>
    <property type="match status" value="1"/>
</dbReference>
<dbReference type="FunFam" id="1.10.1390.10:FF:000001">
    <property type="entry name" value="Glucose-6-phosphate isomerase"/>
    <property type="match status" value="1"/>
</dbReference>
<dbReference type="FunFam" id="3.40.50.10490:FF:000004">
    <property type="entry name" value="Glucose-6-phosphate isomerase"/>
    <property type="match status" value="1"/>
</dbReference>
<dbReference type="Gene3D" id="1.10.1390.10">
    <property type="match status" value="1"/>
</dbReference>
<dbReference type="Gene3D" id="3.40.50.10490">
    <property type="entry name" value="Glucose-6-phosphate isomerase like protein, domain 1"/>
    <property type="match status" value="2"/>
</dbReference>
<dbReference type="HAMAP" id="MF_00473">
    <property type="entry name" value="G6P_isomerase"/>
    <property type="match status" value="1"/>
</dbReference>
<dbReference type="InterPro" id="IPR001672">
    <property type="entry name" value="G6P_Isomerase"/>
</dbReference>
<dbReference type="InterPro" id="IPR023096">
    <property type="entry name" value="G6P_Isomerase_C"/>
</dbReference>
<dbReference type="InterPro" id="IPR018189">
    <property type="entry name" value="Phosphoglucose_isomerase_CS"/>
</dbReference>
<dbReference type="InterPro" id="IPR046348">
    <property type="entry name" value="SIS_dom_sf"/>
</dbReference>
<dbReference type="InterPro" id="IPR035476">
    <property type="entry name" value="SIS_PGI_1"/>
</dbReference>
<dbReference type="InterPro" id="IPR035482">
    <property type="entry name" value="SIS_PGI_2"/>
</dbReference>
<dbReference type="NCBIfam" id="NF001211">
    <property type="entry name" value="PRK00179.1"/>
    <property type="match status" value="1"/>
</dbReference>
<dbReference type="PANTHER" id="PTHR11469">
    <property type="entry name" value="GLUCOSE-6-PHOSPHATE ISOMERASE"/>
    <property type="match status" value="1"/>
</dbReference>
<dbReference type="PANTHER" id="PTHR11469:SF1">
    <property type="entry name" value="GLUCOSE-6-PHOSPHATE ISOMERASE"/>
    <property type="match status" value="1"/>
</dbReference>
<dbReference type="Pfam" id="PF00342">
    <property type="entry name" value="PGI"/>
    <property type="match status" value="1"/>
</dbReference>
<dbReference type="PRINTS" id="PR00662">
    <property type="entry name" value="G6PISOMERASE"/>
</dbReference>
<dbReference type="SUPFAM" id="SSF53697">
    <property type="entry name" value="SIS domain"/>
    <property type="match status" value="1"/>
</dbReference>
<dbReference type="PROSITE" id="PS00765">
    <property type="entry name" value="P_GLUCOSE_ISOMERASE_1"/>
    <property type="match status" value="1"/>
</dbReference>
<dbReference type="PROSITE" id="PS00174">
    <property type="entry name" value="P_GLUCOSE_ISOMERASE_2"/>
    <property type="match status" value="1"/>
</dbReference>
<dbReference type="PROSITE" id="PS51463">
    <property type="entry name" value="P_GLUCOSE_ISOMERASE_3"/>
    <property type="match status" value="1"/>
</dbReference>
<reference key="1">
    <citation type="journal article" date="2011" name="J. Bacteriol.">
        <title>Comparative genomics of 28 Salmonella enterica isolates: evidence for CRISPR-mediated adaptive sublineage evolution.</title>
        <authorList>
            <person name="Fricke W.F."/>
            <person name="Mammel M.K."/>
            <person name="McDermott P.F."/>
            <person name="Tartera C."/>
            <person name="White D.G."/>
            <person name="Leclerc J.E."/>
            <person name="Ravel J."/>
            <person name="Cebula T.A."/>
        </authorList>
    </citation>
    <scope>NUCLEOTIDE SEQUENCE [LARGE SCALE GENOMIC DNA]</scope>
    <source>
        <strain>CVM19633</strain>
    </source>
</reference>
<proteinExistence type="inferred from homology"/>
<name>G6PI_SALSV</name>
<evidence type="ECO:0000255" key="1">
    <source>
        <dbReference type="HAMAP-Rule" id="MF_00473"/>
    </source>
</evidence>
<organism>
    <name type="scientific">Salmonella schwarzengrund (strain CVM19633)</name>
    <dbReference type="NCBI Taxonomy" id="439843"/>
    <lineage>
        <taxon>Bacteria</taxon>
        <taxon>Pseudomonadati</taxon>
        <taxon>Pseudomonadota</taxon>
        <taxon>Gammaproteobacteria</taxon>
        <taxon>Enterobacterales</taxon>
        <taxon>Enterobacteriaceae</taxon>
        <taxon>Salmonella</taxon>
    </lineage>
</organism>
<accession>B4TQN8</accession>
<protein>
    <recommendedName>
        <fullName evidence="1">Glucose-6-phosphate isomerase</fullName>
        <shortName evidence="1">GPI</shortName>
        <ecNumber evidence="1">5.3.1.9</ecNumber>
    </recommendedName>
    <alternativeName>
        <fullName evidence="1">Phosphoglucose isomerase</fullName>
        <shortName evidence="1">PGI</shortName>
    </alternativeName>
    <alternativeName>
        <fullName evidence="1">Phosphohexose isomerase</fullName>
        <shortName evidence="1">PHI</shortName>
    </alternativeName>
</protein>
<gene>
    <name evidence="1" type="primary">pgi</name>
    <name type="ordered locus">SeSA_A4412</name>
</gene>
<keyword id="KW-0963">Cytoplasm</keyword>
<keyword id="KW-0312">Gluconeogenesis</keyword>
<keyword id="KW-0324">Glycolysis</keyword>
<keyword id="KW-0413">Isomerase</keyword>
<sequence length="549" mass="61387">MKNINPTQTSAWQALQKHYDEMKDVTIAELFANDSDRFAKFSATFDDLMLVDFSKNRITEETLAKLQDLAKETDLAGAIKSMFSGEKINRTEDRAVLHVALRNRSNTPIIVDGKDVMPEVNAVLEKMKTFSQAIISGQWKGYTGKAITDVVNIGIGGSDLGPFMVTEALRPYKNHLTMHFVSNVDGTHIAEVLKKVNPETTLFLVASKTFTTQETMTNAHSARDWFLKSAGDEKHVAKHFAALSTNAKAVGEFGIDTANMFEFWDWVGGRYSLWSAIGLSIILSVGFDNFVELLSGAHAMDKHFSTTPAEKNLPILLALIGIWYNNFFGAETEAILPYDQYMHRFAAYFQQGNMESNGKYVDRNGNAVDYQTGPIIWGEPGTNGQHAFYQLIHQGTKMVPCDFIAPAITHNPLSDHHQKLLSNFFAQTEALAFGKSREVVEQEYRDQGKDPAQLEHVVPFKVFEGNRPTNSILLREITPFSLGALIALYEHKIFTQGAILNIFTFDQWGVELGKQLANRILPELGDDKAISSHDSSTNGLINRYKAWRA</sequence>
<comment type="function">
    <text evidence="1">Catalyzes the reversible isomerization of glucose-6-phosphate to fructose-6-phosphate.</text>
</comment>
<comment type="catalytic activity">
    <reaction evidence="1">
        <text>alpha-D-glucose 6-phosphate = beta-D-fructose 6-phosphate</text>
        <dbReference type="Rhea" id="RHEA:11816"/>
        <dbReference type="ChEBI" id="CHEBI:57634"/>
        <dbReference type="ChEBI" id="CHEBI:58225"/>
        <dbReference type="EC" id="5.3.1.9"/>
    </reaction>
</comment>
<comment type="pathway">
    <text evidence="1">Carbohydrate biosynthesis; gluconeogenesis.</text>
</comment>
<comment type="pathway">
    <text evidence="1">Carbohydrate degradation; glycolysis; D-glyceraldehyde 3-phosphate and glycerone phosphate from D-glucose: step 2/4.</text>
</comment>
<comment type="subcellular location">
    <subcellularLocation>
        <location evidence="1">Cytoplasm</location>
    </subcellularLocation>
</comment>
<comment type="similarity">
    <text evidence="1">Belongs to the GPI family.</text>
</comment>